<reference key="1">
    <citation type="journal article" date="1988" name="EMBO J.">
        <title>Differential utilization of the same reading frame in a Xenopus homeobox gene encodes two related proteins sharing the same DNA-binding specificity.</title>
        <authorList>
            <person name="Cho K.W.Y."/>
            <person name="Goetz J."/>
            <person name="Wright C.V.E."/>
            <person name="Fritz A."/>
            <person name="Hardwicke J."/>
            <person name="De Robertis E.M."/>
        </authorList>
    </citation>
    <scope>NUCLEOTIDE SEQUENCE [MRNA] (ISOFORMS 1 AND 2)</scope>
</reference>
<reference key="2">
    <citation type="submission" date="2004-10" db="EMBL/GenBank/DDBJ databases">
        <authorList>
            <consortium name="NIH - Xenopus Gene Collection (XGC) project"/>
        </authorList>
    </citation>
    <scope>NUCLEOTIDE SEQUENCE [LARGE SCALE MRNA] (ISOFORM 1)</scope>
    <source>
        <tissue>Eye</tissue>
    </source>
</reference>
<reference key="3">
    <citation type="journal article" date="1988" name="Nucleic Acids Res.">
        <title>Xenopus homeobox-containing cDNAs expressed in early development.</title>
        <authorList>
            <person name="Fritz A."/>
            <person name="De Robertis E.M."/>
        </authorList>
    </citation>
    <scope>NUCLEOTIDE SEQUENCE [MRNA] OF 121-234</scope>
</reference>
<reference key="4">
    <citation type="journal article" date="1984" name="Cell">
        <title>Cloning of an X. laevis gene expressed during early embryogenesis coding for a peptide region homologous to Drosophila homeotic genes.</title>
        <authorList>
            <person name="Carrasco A.E."/>
            <person name="McGinnis W."/>
            <person name="Gehring W.J."/>
            <person name="De Robertis E.M."/>
        </authorList>
    </citation>
    <scope>NUCLEOTIDE SEQUENCE [GENOMIC DNA] OF 134-200</scope>
</reference>
<gene>
    <name type="primary">hoxc6</name>
</gene>
<feature type="chain" id="PRO_0000013498" description="Homeobox protein Hox-C6">
    <location>
        <begin position="1"/>
        <end position="234"/>
    </location>
</feature>
<feature type="DNA-binding region" description="Homeobox" evidence="1">
    <location>
        <begin position="141"/>
        <end position="200"/>
    </location>
</feature>
<feature type="region of interest" description="Disordered" evidence="2">
    <location>
        <begin position="88"/>
        <end position="116"/>
    </location>
</feature>
<feature type="region of interest" description="Disordered" evidence="2">
    <location>
        <begin position="199"/>
        <end position="234"/>
    </location>
</feature>
<feature type="short sequence motif" description="Antp-type hexapeptide">
    <location>
        <begin position="122"/>
        <end position="127"/>
    </location>
</feature>
<feature type="compositionally biased region" description="Acidic residues" evidence="2">
    <location>
        <begin position="225"/>
        <end position="234"/>
    </location>
</feature>
<feature type="splice variant" id="VSP_021567" description="In isoform 2." evidence="3">
    <location>
        <begin position="1"/>
        <end position="82"/>
    </location>
</feature>
<feature type="sequence variant">
    <original>T</original>
    <variation>S</variation>
    <location>
        <position position="139"/>
    </location>
</feature>
<accession>P02832</accession>
<accession>Q5XGV9</accession>
<name>HXC6_XENLA</name>
<keyword id="KW-0024">Alternative initiation</keyword>
<keyword id="KW-0217">Developmental protein</keyword>
<keyword id="KW-0238">DNA-binding</keyword>
<keyword id="KW-0371">Homeobox</keyword>
<keyword id="KW-0539">Nucleus</keyword>
<keyword id="KW-1185">Reference proteome</keyword>
<keyword id="KW-0804">Transcription</keyword>
<keyword id="KW-0805">Transcription regulation</keyword>
<protein>
    <recommendedName>
        <fullName>Homeobox protein Hox-C6</fullName>
    </recommendedName>
    <alternativeName>
        <fullName>AC1</fullName>
    </alternativeName>
    <alternativeName>
        <fullName>XlHbox-1</fullName>
    </alternativeName>
</protein>
<sequence length="234" mass="26689">MNSYFTNPSLSCHLASGQEVLPNVALNSTAYDPVRHFSTYGAAVAQNRIYSSPFYTPQDNVVFGSSRGPYEYGSNAFYQDKDMLTSCRQNSMGHNTQSSLAQDFSSEQNRGNGQEQKGSIQIYPWMQRMNSHSGVGYGTDRRRGRQIYSRYQTLELEKEFHFNRYLTRRRRIEIANALCLTERQIKIWFQNRRMKWKKESNLSSTLPGGTGAAADSLAEGKEEKQEDSEGQGKE</sequence>
<dbReference type="EMBL" id="X12499">
    <property type="protein sequence ID" value="CAA31020.1"/>
    <property type="molecule type" value="mRNA"/>
</dbReference>
<dbReference type="EMBL" id="X12500">
    <property type="protein sequence ID" value="CAA31021.1"/>
    <property type="molecule type" value="mRNA"/>
</dbReference>
<dbReference type="EMBL" id="BC084319">
    <property type="protein sequence ID" value="AAH84319.1"/>
    <property type="molecule type" value="mRNA"/>
</dbReference>
<dbReference type="EMBL" id="X07101">
    <property type="protein sequence ID" value="CAA30122.1"/>
    <property type="molecule type" value="mRNA"/>
</dbReference>
<dbReference type="EMBL" id="K01943">
    <property type="protein sequence ID" value="AAA49743.1"/>
    <property type="molecule type" value="Genomic_DNA"/>
</dbReference>
<dbReference type="PIR" id="S00992">
    <property type="entry name" value="S00992"/>
</dbReference>
<dbReference type="RefSeq" id="NP_001081015.1">
    <molecule id="P02832-1"/>
    <property type="nucleotide sequence ID" value="NM_001087546.1"/>
</dbReference>
<dbReference type="SMR" id="P02832"/>
<dbReference type="DNASU" id="394330"/>
<dbReference type="GeneID" id="394330"/>
<dbReference type="KEGG" id="xla:394330"/>
<dbReference type="AGR" id="Xenbase:XB-GENE-865143"/>
<dbReference type="CTD" id="394330"/>
<dbReference type="Xenbase" id="XB-GENE-865143">
    <property type="gene designation" value="hoxc6.S"/>
</dbReference>
<dbReference type="OMA" id="CHLTGAH"/>
<dbReference type="OrthoDB" id="6159439at2759"/>
<dbReference type="Proteomes" id="UP000186698">
    <property type="component" value="Chromosome 2S"/>
</dbReference>
<dbReference type="Bgee" id="394330">
    <property type="expression patterns" value="Expressed in neurula embryo and 7 other cell types or tissues"/>
</dbReference>
<dbReference type="GO" id="GO:0005634">
    <property type="term" value="C:nucleus"/>
    <property type="evidence" value="ECO:0000318"/>
    <property type="project" value="GO_Central"/>
</dbReference>
<dbReference type="GO" id="GO:0000981">
    <property type="term" value="F:DNA-binding transcription factor activity, RNA polymerase II-specific"/>
    <property type="evidence" value="ECO:0000318"/>
    <property type="project" value="GO_Central"/>
</dbReference>
<dbReference type="GO" id="GO:0000978">
    <property type="term" value="F:RNA polymerase II cis-regulatory region sequence-specific DNA binding"/>
    <property type="evidence" value="ECO:0000318"/>
    <property type="project" value="GO_Central"/>
</dbReference>
<dbReference type="GO" id="GO:0009952">
    <property type="term" value="P:anterior/posterior pattern specification"/>
    <property type="evidence" value="ECO:0000318"/>
    <property type="project" value="GO_Central"/>
</dbReference>
<dbReference type="GO" id="GO:0006357">
    <property type="term" value="P:regulation of transcription by RNA polymerase II"/>
    <property type="evidence" value="ECO:0000318"/>
    <property type="project" value="GO_Central"/>
</dbReference>
<dbReference type="CDD" id="cd00086">
    <property type="entry name" value="homeodomain"/>
    <property type="match status" value="1"/>
</dbReference>
<dbReference type="FunFam" id="1.10.10.60:FF:000879">
    <property type="match status" value="1"/>
</dbReference>
<dbReference type="Gene3D" id="1.10.10.60">
    <property type="entry name" value="Homeodomain-like"/>
    <property type="match status" value="1"/>
</dbReference>
<dbReference type="InterPro" id="IPR050296">
    <property type="entry name" value="Antp_homeobox"/>
</dbReference>
<dbReference type="InterPro" id="IPR001356">
    <property type="entry name" value="HD"/>
</dbReference>
<dbReference type="InterPro" id="IPR020479">
    <property type="entry name" value="HD_metazoa"/>
</dbReference>
<dbReference type="InterPro" id="IPR001827">
    <property type="entry name" value="Homeobox_Antennapedia_CS"/>
</dbReference>
<dbReference type="InterPro" id="IPR017970">
    <property type="entry name" value="Homeobox_CS"/>
</dbReference>
<dbReference type="InterPro" id="IPR009057">
    <property type="entry name" value="Homeodomain-like_sf"/>
</dbReference>
<dbReference type="PANTHER" id="PTHR45659">
    <property type="entry name" value="HOMEOBOX PROTEIN HOX"/>
    <property type="match status" value="1"/>
</dbReference>
<dbReference type="PANTHER" id="PTHR45659:SF1">
    <property type="entry name" value="HOMEOBOX PROTEIN HOX-C6"/>
    <property type="match status" value="1"/>
</dbReference>
<dbReference type="Pfam" id="PF00046">
    <property type="entry name" value="Homeodomain"/>
    <property type="match status" value="1"/>
</dbReference>
<dbReference type="PRINTS" id="PR00024">
    <property type="entry name" value="HOMEOBOX"/>
</dbReference>
<dbReference type="SMART" id="SM00389">
    <property type="entry name" value="HOX"/>
    <property type="match status" value="1"/>
</dbReference>
<dbReference type="SUPFAM" id="SSF46689">
    <property type="entry name" value="Homeodomain-like"/>
    <property type="match status" value="1"/>
</dbReference>
<dbReference type="PROSITE" id="PS00032">
    <property type="entry name" value="ANTENNAPEDIA"/>
    <property type="match status" value="1"/>
</dbReference>
<dbReference type="PROSITE" id="PS00027">
    <property type="entry name" value="HOMEOBOX_1"/>
    <property type="match status" value="1"/>
</dbReference>
<dbReference type="PROSITE" id="PS50071">
    <property type="entry name" value="HOMEOBOX_2"/>
    <property type="match status" value="1"/>
</dbReference>
<evidence type="ECO:0000255" key="1">
    <source>
        <dbReference type="PROSITE-ProRule" id="PRU00108"/>
    </source>
</evidence>
<evidence type="ECO:0000256" key="2">
    <source>
        <dbReference type="SAM" id="MobiDB-lite"/>
    </source>
</evidence>
<evidence type="ECO:0000303" key="3">
    <source>
    </source>
</evidence>
<evidence type="ECO:0000305" key="4"/>
<organism>
    <name type="scientific">Xenopus laevis</name>
    <name type="common">African clawed frog</name>
    <dbReference type="NCBI Taxonomy" id="8355"/>
    <lineage>
        <taxon>Eukaryota</taxon>
        <taxon>Metazoa</taxon>
        <taxon>Chordata</taxon>
        <taxon>Craniata</taxon>
        <taxon>Vertebrata</taxon>
        <taxon>Euteleostomi</taxon>
        <taxon>Amphibia</taxon>
        <taxon>Batrachia</taxon>
        <taxon>Anura</taxon>
        <taxon>Pipoidea</taxon>
        <taxon>Pipidae</taxon>
        <taxon>Xenopodinae</taxon>
        <taxon>Xenopus</taxon>
        <taxon>Xenopus</taxon>
    </lineage>
</organism>
<proteinExistence type="evidence at transcript level"/>
<comment type="function">
    <text>Sequence-specific transcription factor which is part of a developmental regulatory system that provides cells with specific positional identities on the anterior-posterior axis.</text>
</comment>
<comment type="subcellular location">
    <subcellularLocation>
        <location>Nucleus</location>
    </subcellularLocation>
</comment>
<comment type="alternative products">
    <event type="alternative initiation"/>
    <isoform>
        <id>P02832-1</id>
        <name>1</name>
        <name>Hox-C6 PRII</name>
        <sequence type="displayed"/>
    </isoform>
    <isoform>
        <id>P02832-2</id>
        <name>2</name>
        <name>Hox-C6 PRI</name>
        <sequence type="described" ref="VSP_021567"/>
    </isoform>
</comment>
<comment type="developmental stage">
    <text>Expressed exclusively in early Xenopus embryos.</text>
</comment>
<comment type="similarity">
    <text evidence="4">Belongs to the Antp homeobox family.</text>
</comment>